<comment type="function">
    <text evidence="3">Cytochrome P450 monooxygenase that is able to use 4-ethoxybenzoic acid as a substrate for oxidation.</text>
</comment>
<comment type="cofactor">
    <cofactor evidence="1">
        <name>heme</name>
        <dbReference type="ChEBI" id="CHEBI:30413"/>
    </cofactor>
</comment>
<comment type="pathway">
    <text evidence="5">Secondary metabolite biosynthesis.</text>
</comment>
<comment type="subcellular location">
    <subcellularLocation>
        <location evidence="2">Membrane</location>
        <topology evidence="2">Single-pass membrane protein</topology>
    </subcellularLocation>
</comment>
<comment type="similarity">
    <text evidence="5">Belongs to the cytochrome P450 family.</text>
</comment>
<accession>F1SYA2</accession>
<gene>
    <name evidence="4" type="primary">CYP113</name>
    <name evidence="4" type="synonym">CYP5152A4</name>
</gene>
<sequence>MFLQIAACFTVIGLLYGLVSNLQQNRRLAASLPPGPPGHWLFGNVPPKNFPFIRFAELTEIYGPVFTLRFGRRIVCVVGRHQAAVDILVKHSAETTDRPRAIAASEMLSQGFRILMTPAGERLKKYRRAFHTCLQPSAAATYKPIQYNHAKNYILDCLHDGKCHLEHGRRYAASVVMYIGYGKTTPTSYSDPEVQEVNKCLGRLSEVIKPGAYLVDTYPILKHIPGYASHLWRYGREELALYTRQANAVRKQLEKDEAQPSFAAYLIENQERLGLSNDELAYLSGAIFGAGSDTTAAAIAVMTMAAACYPETQARVQAQLDEVVGSDRAPTFEDEEMLPEVTAFVLEVYRWRPVSAGGVPHRSTKDIVWNGYVIPKGTEIIGNLWAIGRDPELFPDAEEFRPQRWLNENGRIRDDLKYPVFGFGRRVCVGQHVADQSLFINTALALWAFKISQDPAKPIDVLAFTDTANIRPLPFTLRFEPRVKDIEAVLEAHLD</sequence>
<dbReference type="EC" id="1.-.-.-" evidence="3"/>
<dbReference type="EMBL" id="AB573313">
    <property type="protein sequence ID" value="BAK09446.1"/>
    <property type="molecule type" value="mRNA"/>
</dbReference>
<dbReference type="SMR" id="F1SYA2"/>
<dbReference type="GO" id="GO:0016020">
    <property type="term" value="C:membrane"/>
    <property type="evidence" value="ECO:0007669"/>
    <property type="project" value="UniProtKB-SubCell"/>
</dbReference>
<dbReference type="GO" id="GO:0020037">
    <property type="term" value="F:heme binding"/>
    <property type="evidence" value="ECO:0007669"/>
    <property type="project" value="InterPro"/>
</dbReference>
<dbReference type="GO" id="GO:0005506">
    <property type="term" value="F:iron ion binding"/>
    <property type="evidence" value="ECO:0007669"/>
    <property type="project" value="InterPro"/>
</dbReference>
<dbReference type="GO" id="GO:0004497">
    <property type="term" value="F:monooxygenase activity"/>
    <property type="evidence" value="ECO:0007669"/>
    <property type="project" value="UniProtKB-KW"/>
</dbReference>
<dbReference type="GO" id="GO:0016705">
    <property type="term" value="F:oxidoreductase activity, acting on paired donors, with incorporation or reduction of molecular oxygen"/>
    <property type="evidence" value="ECO:0007669"/>
    <property type="project" value="InterPro"/>
</dbReference>
<dbReference type="CDD" id="cd11065">
    <property type="entry name" value="CYP64-like"/>
    <property type="match status" value="1"/>
</dbReference>
<dbReference type="Gene3D" id="1.10.630.10">
    <property type="entry name" value="Cytochrome P450"/>
    <property type="match status" value="1"/>
</dbReference>
<dbReference type="InterPro" id="IPR001128">
    <property type="entry name" value="Cyt_P450"/>
</dbReference>
<dbReference type="InterPro" id="IPR017972">
    <property type="entry name" value="Cyt_P450_CS"/>
</dbReference>
<dbReference type="InterPro" id="IPR002401">
    <property type="entry name" value="Cyt_P450_E_grp-I"/>
</dbReference>
<dbReference type="InterPro" id="IPR036396">
    <property type="entry name" value="Cyt_P450_sf"/>
</dbReference>
<dbReference type="InterPro" id="IPR050364">
    <property type="entry name" value="Cytochrome_P450_fung"/>
</dbReference>
<dbReference type="PANTHER" id="PTHR46300:SF1">
    <property type="entry name" value="P450, PUTATIVE (EUROFUNG)-RELATED"/>
    <property type="match status" value="1"/>
</dbReference>
<dbReference type="PANTHER" id="PTHR46300">
    <property type="entry name" value="P450, PUTATIVE (EUROFUNG)-RELATED-RELATED"/>
    <property type="match status" value="1"/>
</dbReference>
<dbReference type="Pfam" id="PF00067">
    <property type="entry name" value="p450"/>
    <property type="match status" value="1"/>
</dbReference>
<dbReference type="PRINTS" id="PR00463">
    <property type="entry name" value="EP450I"/>
</dbReference>
<dbReference type="PRINTS" id="PR00385">
    <property type="entry name" value="P450"/>
</dbReference>
<dbReference type="SUPFAM" id="SSF48264">
    <property type="entry name" value="Cytochrome P450"/>
    <property type="match status" value="1"/>
</dbReference>
<dbReference type="PROSITE" id="PS00086">
    <property type="entry name" value="CYTOCHROME_P450"/>
    <property type="match status" value="1"/>
</dbReference>
<feature type="chain" id="PRO_0000451358" description="Cytochrome P450 monooxygenase 113">
    <location>
        <begin position="1"/>
        <end position="495"/>
    </location>
</feature>
<feature type="transmembrane region" description="Helical" evidence="2">
    <location>
        <begin position="2"/>
        <end position="22"/>
    </location>
</feature>
<feature type="binding site" description="axial binding residue" evidence="1">
    <location>
        <position position="428"/>
    </location>
    <ligand>
        <name>heme</name>
        <dbReference type="ChEBI" id="CHEBI:30413"/>
    </ligand>
    <ligandPart>
        <name>Fe</name>
        <dbReference type="ChEBI" id="CHEBI:18248"/>
    </ligandPart>
</feature>
<evidence type="ECO:0000250" key="1">
    <source>
        <dbReference type="UniProtKB" id="P04798"/>
    </source>
</evidence>
<evidence type="ECO:0000255" key="2"/>
<evidence type="ECO:0000269" key="3">
    <source>
    </source>
</evidence>
<evidence type="ECO:0000303" key="4">
    <source>
    </source>
</evidence>
<evidence type="ECO:0000305" key="5"/>
<name>CY113_POSPM</name>
<keyword id="KW-0349">Heme</keyword>
<keyword id="KW-0408">Iron</keyword>
<keyword id="KW-0472">Membrane</keyword>
<keyword id="KW-0479">Metal-binding</keyword>
<keyword id="KW-0503">Monooxygenase</keyword>
<keyword id="KW-0560">Oxidoreductase</keyword>
<keyword id="KW-0812">Transmembrane</keyword>
<keyword id="KW-1133">Transmembrane helix</keyword>
<reference key="1">
    <citation type="journal article" date="2012" name="Arch. Microbiol.">
        <title>Molecular identification and functional characterization of cytochrome P450 monooxygenases from the brown-rot basidiomycete Postia placenta.</title>
        <authorList>
            <person name="Ide M."/>
            <person name="Ichinose H."/>
            <person name="Wariishi H."/>
        </authorList>
    </citation>
    <scope>NUCLEOTIDE SEQUENCE [MRNA]</scope>
    <scope>IDENTIFICATION</scope>
    <scope>FUNCTION</scope>
    <scope>CATALYTIC ACTIVITY</scope>
    <source>
        <strain>ATCC 44394 / Madison 698-R</strain>
    </source>
</reference>
<protein>
    <recommendedName>
        <fullName evidence="4">Cytochrome P450 monooxygenase 113</fullName>
        <ecNumber evidence="3">1.-.-.-</ecNumber>
    </recommendedName>
</protein>
<proteinExistence type="evidence at protein level"/>
<organism>
    <name type="scientific">Postia placenta (strain ATCC 44394 / Madison 698-R)</name>
    <name type="common">Brown rot fungus</name>
    <name type="synonym">Poria monticola</name>
    <dbReference type="NCBI Taxonomy" id="561896"/>
    <lineage>
        <taxon>Eukaryota</taxon>
        <taxon>Fungi</taxon>
        <taxon>Dikarya</taxon>
        <taxon>Basidiomycota</taxon>
        <taxon>Agaricomycotina</taxon>
        <taxon>Agaricomycetes</taxon>
        <taxon>Polyporales</taxon>
        <taxon>Adustoporiaceae</taxon>
        <taxon>Rhodonia</taxon>
    </lineage>
</organism>